<sequence length="785" mass="90261">MTKKLTIKRKVKEPEPQNEAPDSHESSDNEEEEEDLLQAVKDPGEDSTDDEGIDQEYQTDSSEDLEFESDEEGNYLGRKGAEGSSGDDDEESAEDEEEEDDADAKKSSKNNDEEAATTSKSIKKSQEKPTSSNKVVPVVPARDPSKVEYADSDTSDEEDIRNTVGNIPMHWYDEYKHIGYDWDAKKIVKPPKGDQIDDFLRKIEDPNFWRTVKDPLTGQEVLLTDADIALIKRINSGRIPNEEHDEYAPWIEWFTSEVEKMPIKNVPDHKRSFLPSGSEKKTVSRMVHALKMGWMKTTEEVQREKQEKRGPKFYMLWETDTSREQMRRIHDPVSAPKRDLPGHAESYNPPPEYLFDEKEAKEWHKLKDEPHRRKLHFMPQKFKSLREVPAYSRYLRERFLRCLDLYLCPRAKRVKLNIDAEYLIPKLPSPRDLQPFPTVESLVYRGHTDLVRSVSVEPKGEYLVSGSDDKTVKIWEIATGRCIRTIETEDVVRCVAWCPNAKLSIIAVATGSRLLLVNPKVGDKLLVKKTDDLLAEAPVLDVIENERIKTAVQWANAEPADQEKGVRVIITHFKPIRQVTWHGRGDYLATVMPEGANRSALIHQLSKRRSQIPFSKSKGLIQCVLFHPVKPCFFVATQHNIRIYDLVKQELIKKLLTNSKWISGMSIHPKGDNLLVSTYDKKMLWFDLDLSTKPYQTMRLHRNAVRSVAFHLRYPLFASGSDDQAVIVSHGMVYNDLLQNPLIVPLKKLQTHEKREEFGVLDVNWHPVQPWVFSTGADCTIRLFT</sequence>
<reference key="1">
    <citation type="journal article" date="2007" name="Nature">
        <title>Evolution of genes and genomes on the Drosophila phylogeny.</title>
        <authorList>
            <consortium name="Drosophila 12 genomes consortium"/>
        </authorList>
    </citation>
    <scope>NUCLEOTIDE SEQUENCE [LARGE SCALE GENOMIC DNA]</scope>
    <source>
        <strain>MSH-3 / Tucson 14011-0111.49</strain>
    </source>
</reference>
<gene>
    <name type="ORF">GL17224</name>
</gene>
<comment type="function">
    <text evidence="1">Required for maturation of ribosomal RNAs and formation of the large ribosomal subunit.</text>
</comment>
<comment type="subcellular location">
    <subcellularLocation>
        <location evidence="1">Nucleus</location>
        <location evidence="1">Nucleolus</location>
    </subcellularLocation>
    <subcellularLocation>
        <location evidence="1">Nucleus</location>
        <location evidence="1">Nucleoplasm</location>
    </subcellularLocation>
</comment>
<comment type="similarity">
    <text evidence="1">Belongs to the WD repeat BOP1/ERB1 family.</text>
</comment>
<protein>
    <recommendedName>
        <fullName evidence="1">Ribosome biogenesis protein BOP1 homolog</fullName>
    </recommendedName>
</protein>
<keyword id="KW-0539">Nucleus</keyword>
<keyword id="KW-1185">Reference proteome</keyword>
<keyword id="KW-0677">Repeat</keyword>
<keyword id="KW-0690">Ribosome biogenesis</keyword>
<keyword id="KW-0698">rRNA processing</keyword>
<keyword id="KW-0853">WD repeat</keyword>
<accession>B4GIU9</accession>
<evidence type="ECO:0000255" key="1">
    <source>
        <dbReference type="HAMAP-Rule" id="MF_03027"/>
    </source>
</evidence>
<evidence type="ECO:0000256" key="2">
    <source>
        <dbReference type="SAM" id="MobiDB-lite"/>
    </source>
</evidence>
<feature type="chain" id="PRO_0000370399" description="Ribosome biogenesis protein BOP1 homolog">
    <location>
        <begin position="1"/>
        <end position="785"/>
    </location>
</feature>
<feature type="repeat" description="WD 1">
    <location>
        <begin position="446"/>
        <end position="487"/>
    </location>
</feature>
<feature type="repeat" description="WD 2">
    <location>
        <begin position="489"/>
        <end position="527"/>
    </location>
</feature>
<feature type="repeat" description="WD 3">
    <location>
        <begin position="571"/>
        <end position="613"/>
    </location>
</feature>
<feature type="repeat" description="WD 4">
    <location>
        <begin position="616"/>
        <end position="654"/>
    </location>
</feature>
<feature type="repeat" description="WD 5">
    <location>
        <begin position="657"/>
        <end position="696"/>
    </location>
</feature>
<feature type="repeat" description="WD 6">
    <location>
        <begin position="700"/>
        <end position="739"/>
    </location>
</feature>
<feature type="repeat" description="WD 7">
    <location>
        <begin position="755"/>
        <end position="785"/>
    </location>
</feature>
<feature type="region of interest" description="Disordered" evidence="2">
    <location>
        <begin position="1"/>
        <end position="160"/>
    </location>
</feature>
<feature type="compositionally biased region" description="Basic residues" evidence="2">
    <location>
        <begin position="1"/>
        <end position="11"/>
    </location>
</feature>
<feature type="compositionally biased region" description="Acidic residues" evidence="2">
    <location>
        <begin position="45"/>
        <end position="54"/>
    </location>
</feature>
<feature type="compositionally biased region" description="Acidic residues" evidence="2">
    <location>
        <begin position="61"/>
        <end position="73"/>
    </location>
</feature>
<feature type="compositionally biased region" description="Acidic residues" evidence="2">
    <location>
        <begin position="85"/>
        <end position="102"/>
    </location>
</feature>
<feature type="compositionally biased region" description="Basic and acidic residues" evidence="2">
    <location>
        <begin position="103"/>
        <end position="112"/>
    </location>
</feature>
<feature type="compositionally biased region" description="Acidic residues" evidence="2">
    <location>
        <begin position="150"/>
        <end position="159"/>
    </location>
</feature>
<dbReference type="EMBL" id="CH479183">
    <property type="protein sequence ID" value="EDW35434.1"/>
    <property type="molecule type" value="Genomic_DNA"/>
</dbReference>
<dbReference type="SMR" id="B4GIU9"/>
<dbReference type="STRING" id="7234.B4GIU9"/>
<dbReference type="EnsemblMetazoa" id="FBtr0182839">
    <property type="protein sequence ID" value="FBpp0181331"/>
    <property type="gene ID" value="FBgn0154827"/>
</dbReference>
<dbReference type="EnsemblMetazoa" id="XM_002017559.2">
    <property type="protein sequence ID" value="XP_002017595.1"/>
    <property type="gene ID" value="LOC6592244"/>
</dbReference>
<dbReference type="GeneID" id="6592244"/>
<dbReference type="KEGG" id="dpe:6592244"/>
<dbReference type="eggNOG" id="KOG0650">
    <property type="taxonomic scope" value="Eukaryota"/>
</dbReference>
<dbReference type="HOGENOM" id="CLU_011390_1_0_1"/>
<dbReference type="OMA" id="MRPAKGE"/>
<dbReference type="OrthoDB" id="5571054at2759"/>
<dbReference type="PhylomeDB" id="B4GIU9"/>
<dbReference type="Proteomes" id="UP000008744">
    <property type="component" value="Unassembled WGS sequence"/>
</dbReference>
<dbReference type="GO" id="GO:0005654">
    <property type="term" value="C:nucleoplasm"/>
    <property type="evidence" value="ECO:0007669"/>
    <property type="project" value="UniProtKB-SubCell"/>
</dbReference>
<dbReference type="GO" id="GO:0070545">
    <property type="term" value="C:PeBoW complex"/>
    <property type="evidence" value="ECO:0007669"/>
    <property type="project" value="TreeGrafter"/>
</dbReference>
<dbReference type="GO" id="GO:0030687">
    <property type="term" value="C:preribosome, large subunit precursor"/>
    <property type="evidence" value="ECO:0007669"/>
    <property type="project" value="UniProtKB-UniRule"/>
</dbReference>
<dbReference type="GO" id="GO:0043021">
    <property type="term" value="F:ribonucleoprotein complex binding"/>
    <property type="evidence" value="ECO:0007669"/>
    <property type="project" value="UniProtKB-UniRule"/>
</dbReference>
<dbReference type="GO" id="GO:0000466">
    <property type="term" value="P:maturation of 5.8S rRNA from tricistronic rRNA transcript (SSU-rRNA, 5.8S rRNA, LSU-rRNA)"/>
    <property type="evidence" value="ECO:0007669"/>
    <property type="project" value="UniProtKB-UniRule"/>
</dbReference>
<dbReference type="GO" id="GO:0000463">
    <property type="term" value="P:maturation of LSU-rRNA from tricistronic rRNA transcript (SSU-rRNA, 5.8S rRNA, LSU-rRNA)"/>
    <property type="evidence" value="ECO:0007669"/>
    <property type="project" value="UniProtKB-UniRule"/>
</dbReference>
<dbReference type="GO" id="GO:0035206">
    <property type="term" value="P:regulation of hemocyte proliferation"/>
    <property type="evidence" value="ECO:0007669"/>
    <property type="project" value="EnsemblMetazoa"/>
</dbReference>
<dbReference type="CDD" id="cd00200">
    <property type="entry name" value="WD40"/>
    <property type="match status" value="1"/>
</dbReference>
<dbReference type="FunFam" id="2.130.10.10:FF:000061">
    <property type="entry name" value="Ribosome biogenesis protein BOP1 homolog"/>
    <property type="match status" value="1"/>
</dbReference>
<dbReference type="Gene3D" id="2.130.10.10">
    <property type="entry name" value="YVTN repeat-like/Quinoprotein amine dehydrogenase"/>
    <property type="match status" value="1"/>
</dbReference>
<dbReference type="HAMAP" id="MF_03027">
    <property type="entry name" value="BOP1"/>
    <property type="match status" value="1"/>
</dbReference>
<dbReference type="InterPro" id="IPR028598">
    <property type="entry name" value="BOP1/Erb1"/>
</dbReference>
<dbReference type="InterPro" id="IPR012953">
    <property type="entry name" value="BOP1_N_dom"/>
</dbReference>
<dbReference type="InterPro" id="IPR015943">
    <property type="entry name" value="WD40/YVTN_repeat-like_dom_sf"/>
</dbReference>
<dbReference type="InterPro" id="IPR019775">
    <property type="entry name" value="WD40_repeat_CS"/>
</dbReference>
<dbReference type="InterPro" id="IPR036322">
    <property type="entry name" value="WD40_repeat_dom_sf"/>
</dbReference>
<dbReference type="InterPro" id="IPR001680">
    <property type="entry name" value="WD40_rpt"/>
</dbReference>
<dbReference type="PANTHER" id="PTHR17605:SF0">
    <property type="entry name" value="RIBOSOME BIOGENESIS PROTEIN BOP1"/>
    <property type="match status" value="1"/>
</dbReference>
<dbReference type="PANTHER" id="PTHR17605">
    <property type="entry name" value="RIBOSOME BIOGENESIS PROTEIN BOP1 BLOCK OF PROLIFERATION 1 PROTEIN"/>
    <property type="match status" value="1"/>
</dbReference>
<dbReference type="Pfam" id="PF08145">
    <property type="entry name" value="BOP1NT"/>
    <property type="match status" value="1"/>
</dbReference>
<dbReference type="Pfam" id="PF00400">
    <property type="entry name" value="WD40"/>
    <property type="match status" value="3"/>
</dbReference>
<dbReference type="SMART" id="SM01035">
    <property type="entry name" value="BOP1NT"/>
    <property type="match status" value="1"/>
</dbReference>
<dbReference type="SMART" id="SM00320">
    <property type="entry name" value="WD40"/>
    <property type="match status" value="7"/>
</dbReference>
<dbReference type="SUPFAM" id="SSF50978">
    <property type="entry name" value="WD40 repeat-like"/>
    <property type="match status" value="1"/>
</dbReference>
<dbReference type="PROSITE" id="PS00678">
    <property type="entry name" value="WD_REPEATS_1"/>
    <property type="match status" value="1"/>
</dbReference>
<dbReference type="PROSITE" id="PS50082">
    <property type="entry name" value="WD_REPEATS_2"/>
    <property type="match status" value="1"/>
</dbReference>
<dbReference type="PROSITE" id="PS50294">
    <property type="entry name" value="WD_REPEATS_REGION"/>
    <property type="match status" value="2"/>
</dbReference>
<name>BOP1_DROPE</name>
<proteinExistence type="inferred from homology"/>
<organism>
    <name type="scientific">Drosophila persimilis</name>
    <name type="common">Fruit fly</name>
    <dbReference type="NCBI Taxonomy" id="7234"/>
    <lineage>
        <taxon>Eukaryota</taxon>
        <taxon>Metazoa</taxon>
        <taxon>Ecdysozoa</taxon>
        <taxon>Arthropoda</taxon>
        <taxon>Hexapoda</taxon>
        <taxon>Insecta</taxon>
        <taxon>Pterygota</taxon>
        <taxon>Neoptera</taxon>
        <taxon>Endopterygota</taxon>
        <taxon>Diptera</taxon>
        <taxon>Brachycera</taxon>
        <taxon>Muscomorpha</taxon>
        <taxon>Ephydroidea</taxon>
        <taxon>Drosophilidae</taxon>
        <taxon>Drosophila</taxon>
        <taxon>Sophophora</taxon>
    </lineage>
</organism>